<organism>
    <name type="scientific">Daboia siamensis</name>
    <name type="common">Eastern Russel's viper</name>
    <name type="synonym">Daboia russelii siamensis</name>
    <dbReference type="NCBI Taxonomy" id="343250"/>
    <lineage>
        <taxon>Eukaryota</taxon>
        <taxon>Metazoa</taxon>
        <taxon>Chordata</taxon>
        <taxon>Craniata</taxon>
        <taxon>Vertebrata</taxon>
        <taxon>Euteleostomi</taxon>
        <taxon>Lepidosauria</taxon>
        <taxon>Squamata</taxon>
        <taxon>Bifurcata</taxon>
        <taxon>Unidentata</taxon>
        <taxon>Episquamata</taxon>
        <taxon>Toxicofera</taxon>
        <taxon>Serpentes</taxon>
        <taxon>Colubroidea</taxon>
        <taxon>Viperidae</taxon>
        <taxon>Viperinae</taxon>
        <taxon>Daboia</taxon>
    </lineage>
</organism>
<protein>
    <recommendedName>
        <fullName>L-amino-acid oxidase</fullName>
        <shortName evidence="4">DRS-LAAO</shortName>
        <shortName>LAO</shortName>
        <ecNumber evidence="3">1.4.3.2</ecNumber>
    </recommendedName>
</protein>
<dbReference type="EC" id="1.4.3.2" evidence="3"/>
<dbReference type="EMBL" id="DQ104365">
    <property type="protein sequence ID" value="AAZ08620.1"/>
    <property type="molecule type" value="mRNA"/>
</dbReference>
<dbReference type="SMR" id="Q4F867"/>
<dbReference type="BRENDA" id="1.4.3.2">
    <property type="organism ID" value="6667"/>
</dbReference>
<dbReference type="GO" id="GO:0005576">
    <property type="term" value="C:extracellular region"/>
    <property type="evidence" value="ECO:0000314"/>
    <property type="project" value="UniProtKB"/>
</dbReference>
<dbReference type="GO" id="GO:0001716">
    <property type="term" value="F:L-amino-acid oxidase activity"/>
    <property type="evidence" value="ECO:0000314"/>
    <property type="project" value="UniProtKB"/>
</dbReference>
<dbReference type="GO" id="GO:0050025">
    <property type="term" value="F:L-glutamate oxidase activity"/>
    <property type="evidence" value="ECO:0007669"/>
    <property type="project" value="RHEA"/>
</dbReference>
<dbReference type="GO" id="GO:0050029">
    <property type="term" value="F:L-lysine oxidase activity"/>
    <property type="evidence" value="ECO:0007669"/>
    <property type="project" value="RHEA"/>
</dbReference>
<dbReference type="GO" id="GO:0106329">
    <property type="term" value="F:L-phenylalaine oxidase activity"/>
    <property type="evidence" value="ECO:0007669"/>
    <property type="project" value="RHEA"/>
</dbReference>
<dbReference type="GO" id="GO:0042803">
    <property type="term" value="F:protein homodimerization activity"/>
    <property type="evidence" value="ECO:0000314"/>
    <property type="project" value="UniProtKB"/>
</dbReference>
<dbReference type="GO" id="GO:0090729">
    <property type="term" value="F:toxin activity"/>
    <property type="evidence" value="ECO:0000314"/>
    <property type="project" value="UniProtKB"/>
</dbReference>
<dbReference type="GO" id="GO:0009063">
    <property type="term" value="P:amino acid catabolic process"/>
    <property type="evidence" value="ECO:0007669"/>
    <property type="project" value="TreeGrafter"/>
</dbReference>
<dbReference type="GO" id="GO:0006915">
    <property type="term" value="P:apoptotic process"/>
    <property type="evidence" value="ECO:0007669"/>
    <property type="project" value="UniProtKB-KW"/>
</dbReference>
<dbReference type="GO" id="GO:0042742">
    <property type="term" value="P:defense response to bacterium"/>
    <property type="evidence" value="ECO:0000314"/>
    <property type="project" value="UniProtKB"/>
</dbReference>
<dbReference type="GO" id="GO:0031640">
    <property type="term" value="P:killing of cells of another organism"/>
    <property type="evidence" value="ECO:0007669"/>
    <property type="project" value="UniProtKB-KW"/>
</dbReference>
<dbReference type="GO" id="GO:0044477">
    <property type="term" value="P:venom-mediated suppression of platelet aggregation"/>
    <property type="evidence" value="ECO:0000314"/>
    <property type="project" value="UniProtKB"/>
</dbReference>
<dbReference type="FunFam" id="1.10.405.10:FF:000004">
    <property type="entry name" value="Amine oxidase"/>
    <property type="match status" value="1"/>
</dbReference>
<dbReference type="FunFam" id="3.50.50.60:FF:001010">
    <property type="entry name" value="L-amino-acid oxidase"/>
    <property type="match status" value="1"/>
</dbReference>
<dbReference type="Gene3D" id="1.10.10.1620">
    <property type="match status" value="1"/>
</dbReference>
<dbReference type="Gene3D" id="3.90.660.10">
    <property type="match status" value="1"/>
</dbReference>
<dbReference type="Gene3D" id="3.50.50.60">
    <property type="entry name" value="FAD/NAD(P)-binding domain"/>
    <property type="match status" value="1"/>
</dbReference>
<dbReference type="Gene3D" id="1.10.405.10">
    <property type="entry name" value="Guanine Nucleotide Dissociation Inhibitor, domain 1"/>
    <property type="match status" value="1"/>
</dbReference>
<dbReference type="InterPro" id="IPR002937">
    <property type="entry name" value="Amino_oxidase"/>
</dbReference>
<dbReference type="InterPro" id="IPR036188">
    <property type="entry name" value="FAD/NAD-bd_sf"/>
</dbReference>
<dbReference type="InterPro" id="IPR050281">
    <property type="entry name" value="Flavin_monoamine_oxidase"/>
</dbReference>
<dbReference type="PANTHER" id="PTHR10742:SF355">
    <property type="entry name" value="AMINE OXIDASE"/>
    <property type="match status" value="1"/>
</dbReference>
<dbReference type="PANTHER" id="PTHR10742">
    <property type="entry name" value="FLAVIN MONOAMINE OXIDASE"/>
    <property type="match status" value="1"/>
</dbReference>
<dbReference type="Pfam" id="PF01593">
    <property type="entry name" value="Amino_oxidase"/>
    <property type="match status" value="1"/>
</dbReference>
<dbReference type="SUPFAM" id="SSF54373">
    <property type="entry name" value="FAD-linked reductases, C-terminal domain"/>
    <property type="match status" value="1"/>
</dbReference>
<dbReference type="SUPFAM" id="SSF51905">
    <property type="entry name" value="FAD/NAD(P)-binding domain"/>
    <property type="match status" value="1"/>
</dbReference>
<keyword id="KW-0044">Antibiotic</keyword>
<keyword id="KW-0929">Antimicrobial</keyword>
<keyword id="KW-0053">Apoptosis</keyword>
<keyword id="KW-0204">Cytolysis</keyword>
<keyword id="KW-0903">Direct protein sequencing</keyword>
<keyword id="KW-1015">Disulfide bond</keyword>
<keyword id="KW-0274">FAD</keyword>
<keyword id="KW-0285">Flavoprotein</keyword>
<keyword id="KW-0325">Glycoprotein</keyword>
<keyword id="KW-0354">Hemolysis</keyword>
<keyword id="KW-1199">Hemostasis impairing toxin</keyword>
<keyword id="KW-0560">Oxidoreductase</keyword>
<keyword id="KW-1201">Platelet aggregation inhibiting toxin</keyword>
<keyword id="KW-0964">Secreted</keyword>
<keyword id="KW-0800">Toxin</keyword>
<proteinExistence type="evidence at protein level"/>
<evidence type="ECO:0000250" key="1">
    <source>
        <dbReference type="UniProtKB" id="P81382"/>
    </source>
</evidence>
<evidence type="ECO:0000255" key="2"/>
<evidence type="ECO:0000269" key="3">
    <source>
    </source>
</evidence>
<evidence type="ECO:0000303" key="4">
    <source>
    </source>
</evidence>
<evidence type="ECO:0000305" key="5"/>
<evidence type="ECO:0000305" key="6">
    <source>
    </source>
</evidence>
<comment type="function">
    <text evidence="3">Catalyzes an oxidative deamination of predominantly hydrophobic and aromatic L-amino acids, thus producing hydrogen peroxide that may contribute to the diverse toxic effects of this enzyme (PubMed:19523971). Is highly active on L-Leu followed by L-Phe and L-Ile, moderately active on L-Asp, L-Glu, and L-Lys, and not active on L-Pro, L-Asn, L-Gly, L-Ser and L-Cys (PubMed:19523971). Exhibits diverse biological activities such as antibacterial activity (Minimal inhibitory concentrations (MIC) are 9.0 ug/ml against S.aureus, 144.0 ug/ml against P.aeruginosa and 288.0 ug/ml against E.coli) and inhibition of ADP- and TMVA-induced platelet aggregation. Effects of snake L-amino oxidases on platelets are controversial, since they either induce aggregation or inhibit agonist-induced aggregation. These different effects are probably due to different experimental conditions. Unlike other snake venom L-amino acid oxidases, does not induce hemorrhage. This protein may also induce hemolysis, edema, apoptosis and have antiparasitic activities.</text>
</comment>
<comment type="catalytic activity">
    <reaction evidence="3">
        <text>an L-alpha-amino acid + O2 + H2O = a 2-oxocarboxylate + H2O2 + NH4(+)</text>
        <dbReference type="Rhea" id="RHEA:13781"/>
        <dbReference type="ChEBI" id="CHEBI:15377"/>
        <dbReference type="ChEBI" id="CHEBI:15379"/>
        <dbReference type="ChEBI" id="CHEBI:16240"/>
        <dbReference type="ChEBI" id="CHEBI:28938"/>
        <dbReference type="ChEBI" id="CHEBI:35179"/>
        <dbReference type="ChEBI" id="CHEBI:59869"/>
        <dbReference type="EC" id="1.4.3.2"/>
    </reaction>
</comment>
<comment type="catalytic activity">
    <reaction evidence="3">
        <text>L-leucine + O2 + H2O = 4-methyl-2-oxopentanoate + H2O2 + NH4(+)</text>
        <dbReference type="Rhea" id="RHEA:60996"/>
        <dbReference type="ChEBI" id="CHEBI:15377"/>
        <dbReference type="ChEBI" id="CHEBI:15379"/>
        <dbReference type="ChEBI" id="CHEBI:16240"/>
        <dbReference type="ChEBI" id="CHEBI:17865"/>
        <dbReference type="ChEBI" id="CHEBI:28938"/>
        <dbReference type="ChEBI" id="CHEBI:57427"/>
    </reaction>
</comment>
<comment type="catalytic activity">
    <reaction evidence="3">
        <text>L-phenylalanine + O2 + H2O = 3-phenylpyruvate + H2O2 + NH4(+)</text>
        <dbReference type="Rhea" id="RHEA:61240"/>
        <dbReference type="ChEBI" id="CHEBI:15377"/>
        <dbReference type="ChEBI" id="CHEBI:15379"/>
        <dbReference type="ChEBI" id="CHEBI:16240"/>
        <dbReference type="ChEBI" id="CHEBI:18005"/>
        <dbReference type="ChEBI" id="CHEBI:28938"/>
        <dbReference type="ChEBI" id="CHEBI:58095"/>
    </reaction>
</comment>
<comment type="catalytic activity">
    <reaction evidence="3">
        <text>L-isoleucine + O2 + H2O = (S)-3-methyl-2-oxopentanoate + H2O2 + NH4(+)</text>
        <dbReference type="Rhea" id="RHEA:61232"/>
        <dbReference type="ChEBI" id="CHEBI:15377"/>
        <dbReference type="ChEBI" id="CHEBI:15379"/>
        <dbReference type="ChEBI" id="CHEBI:16240"/>
        <dbReference type="ChEBI" id="CHEBI:28938"/>
        <dbReference type="ChEBI" id="CHEBI:35146"/>
        <dbReference type="ChEBI" id="CHEBI:58045"/>
    </reaction>
</comment>
<comment type="catalytic activity">
    <reaction evidence="3">
        <text>L-aspartate + O2 + H2O = oxaloacetate + H2O2 + NH4(+)</text>
        <dbReference type="Rhea" id="RHEA:19025"/>
        <dbReference type="ChEBI" id="CHEBI:15377"/>
        <dbReference type="ChEBI" id="CHEBI:15379"/>
        <dbReference type="ChEBI" id="CHEBI:16240"/>
        <dbReference type="ChEBI" id="CHEBI:16452"/>
        <dbReference type="ChEBI" id="CHEBI:28938"/>
        <dbReference type="ChEBI" id="CHEBI:29991"/>
    </reaction>
</comment>
<comment type="catalytic activity">
    <reaction evidence="3">
        <text>L-lysine + O2 + H2O = 6-amino-2-oxohexanoate + H2O2 + NH4(+)</text>
        <dbReference type="Rhea" id="RHEA:14437"/>
        <dbReference type="ChEBI" id="CHEBI:15377"/>
        <dbReference type="ChEBI" id="CHEBI:15379"/>
        <dbReference type="ChEBI" id="CHEBI:16240"/>
        <dbReference type="ChEBI" id="CHEBI:28938"/>
        <dbReference type="ChEBI" id="CHEBI:32551"/>
        <dbReference type="ChEBI" id="CHEBI:58183"/>
    </reaction>
</comment>
<comment type="catalytic activity">
    <reaction evidence="3">
        <text>L-glutamate + O2 + H2O = H2O2 + 2-oxoglutarate + NH4(+)</text>
        <dbReference type="Rhea" id="RHEA:20728"/>
        <dbReference type="ChEBI" id="CHEBI:15377"/>
        <dbReference type="ChEBI" id="CHEBI:15379"/>
        <dbReference type="ChEBI" id="CHEBI:16240"/>
        <dbReference type="ChEBI" id="CHEBI:16810"/>
        <dbReference type="ChEBI" id="CHEBI:28938"/>
        <dbReference type="ChEBI" id="CHEBI:29985"/>
    </reaction>
</comment>
<comment type="cofactor">
    <cofactor evidence="1">
        <name>FAD</name>
        <dbReference type="ChEBI" id="CHEBI:57692"/>
    </cofactor>
</comment>
<comment type="biophysicochemical properties">
    <phDependence>
        <text evidence="3">Optimum pH is 8.8.</text>
    </phDependence>
</comment>
<comment type="subunit">
    <text evidence="3">Homodimer; non-covalently linked.</text>
</comment>
<comment type="subcellular location">
    <subcellularLocation>
        <location evidence="3">Secreted</location>
    </subcellularLocation>
</comment>
<comment type="tissue specificity">
    <text evidence="6">Expressed by the venom gland.</text>
</comment>
<comment type="similarity">
    <text evidence="5">Belongs to the flavin monoamine oxidase family. FIG1 subfamily.</text>
</comment>
<feature type="chain" id="PRO_0000315372" description="L-amino-acid oxidase">
    <location>
        <begin position="1" status="less than"/>
        <end position="407"/>
    </location>
</feature>
<feature type="binding site" evidence="1">
    <location>
        <position position="144"/>
    </location>
    <ligand>
        <name>substrate</name>
    </ligand>
</feature>
<feature type="binding site" evidence="1">
    <location>
        <position position="182"/>
    </location>
    <ligand>
        <name>FAD</name>
        <dbReference type="ChEBI" id="CHEBI:57692"/>
    </ligand>
</feature>
<feature type="binding site" evidence="1">
    <location>
        <position position="293"/>
    </location>
    <ligand>
        <name>substrate</name>
    </ligand>
</feature>
<feature type="binding site" evidence="1">
    <location>
        <position position="378"/>
    </location>
    <ligand>
        <name>FAD</name>
        <dbReference type="ChEBI" id="CHEBI:57692"/>
    </ligand>
</feature>
<feature type="binding site" evidence="1">
    <location>
        <begin position="385"/>
        <end position="390"/>
    </location>
    <ligand>
        <name>FAD</name>
        <dbReference type="ChEBI" id="CHEBI:57692"/>
    </ligand>
</feature>
<feature type="binding site" evidence="1">
    <location>
        <begin position="385"/>
        <end position="386"/>
    </location>
    <ligand>
        <name>substrate</name>
    </ligand>
</feature>
<feature type="glycosylation site" description="N-linked (GlcNAc...) asparagine" evidence="2">
    <location>
        <position position="93"/>
    </location>
</feature>
<feature type="glycosylation site" description="N-linked (GlcNAc...) asparagine" evidence="2">
    <location>
        <position position="282"/>
    </location>
</feature>
<feature type="disulfide bond" evidence="1">
    <location>
        <begin position="10"/>
        <end position="94"/>
    </location>
</feature>
<feature type="disulfide bond" evidence="1">
    <location>
        <begin position="252"/>
        <end position="333"/>
    </location>
</feature>
<feature type="non-consecutive residues" evidence="4">
    <location>
        <begin position="15"/>
        <end position="16"/>
    </location>
</feature>
<feature type="non-terminal residue" evidence="4">
    <location>
        <position position="1"/>
    </location>
</feature>
<accession>Q4F867</accession>
<name>OXLA_DABSI</name>
<sequence>ADDKNPLEECFREDDHRIVREYIRKFGLKLNEFVQETENGWYFIKNIRKRVGEVKKDPGLLKYPVKPSEAGKSAGQLYQESLGKAVEELKRTNCSYILNKYDTYSTKEYLIKEGNLSPGAVDMIGDLLNEDSGYYVSFIESLKHDDIFAYEKRFDEIVGGMDQLPTSMYRAIEESVRFKARVIKIQQNAEKVTVTYQTTQKNLLLETVDYVIVCTTSRAARRITFKPPLPPKKAHALRSVHYRSGTKIFLTCTKKFWEDDGIQGGKSTTDLPSRFIYYPNHNFTTGVGVIIAYGIGDDANFFQALNLNECADIVFNDLSSIHQLPKKDLQTFCYPSIIQKWSLDKYAMGAITTFTPYQFQHFSEALTAPVGRIFFAGEYTANAHGWIDSTIKSGLTAARDVNRASEL</sequence>
<reference key="1">
    <citation type="journal article" date="2009" name="Toxicon">
        <title>Purification and characterization of a new L-amino acid oxidase from Daboia russellii siamensis venom.</title>
        <authorList>
            <person name="Zhong S.-R."/>
            <person name="Jin Y."/>
            <person name="Wu J.-B."/>
            <person name="Jia Y.-H."/>
            <person name="Xu G.-L."/>
            <person name="Wang G.-C."/>
            <person name="Xiong Y.-L."/>
            <person name="Lu Q.-M."/>
        </authorList>
    </citation>
    <scope>PROTEIN SEQUENCE OF 1-15</scope>
    <scope>NUCLEOTIDE SEQUENCE [MRNA] OF 16-407</scope>
    <scope>FUNCTION</scope>
    <scope>CATALYTIC ACTIVITY</scope>
    <scope>SUBUNIT</scope>
    <scope>SUBCELLULAR LOCATION</scope>
    <scope>GLYCOSYLATION</scope>
    <scope>BIOPHYSICOCHEMICAL PROPERTIES</scope>
    <scope>SUBSTRATE SPECIFICITY</scope>
    <source>
        <tissue>Venom</tissue>
        <tissue>Venom gland</tissue>
    </source>
</reference>